<name>LEPA_PSESM</name>
<evidence type="ECO:0000255" key="1">
    <source>
        <dbReference type="HAMAP-Rule" id="MF_00071"/>
    </source>
</evidence>
<dbReference type="EC" id="3.6.5.n1" evidence="1"/>
<dbReference type="EMBL" id="AE016853">
    <property type="protein sequence ID" value="AAO57676.1"/>
    <property type="molecule type" value="Genomic_DNA"/>
</dbReference>
<dbReference type="RefSeq" id="NP_793981.1">
    <property type="nucleotide sequence ID" value="NC_004578.1"/>
</dbReference>
<dbReference type="SMR" id="Q87XF8"/>
<dbReference type="STRING" id="223283.PSPTO_4220"/>
<dbReference type="KEGG" id="pst:PSPTO_4220"/>
<dbReference type="PATRIC" id="fig|223283.9.peg.4327"/>
<dbReference type="eggNOG" id="COG0481">
    <property type="taxonomic scope" value="Bacteria"/>
</dbReference>
<dbReference type="HOGENOM" id="CLU_009995_3_3_6"/>
<dbReference type="OrthoDB" id="9801472at2"/>
<dbReference type="PhylomeDB" id="Q87XF8"/>
<dbReference type="Proteomes" id="UP000002515">
    <property type="component" value="Chromosome"/>
</dbReference>
<dbReference type="GO" id="GO:0005886">
    <property type="term" value="C:plasma membrane"/>
    <property type="evidence" value="ECO:0007669"/>
    <property type="project" value="UniProtKB-SubCell"/>
</dbReference>
<dbReference type="GO" id="GO:0005525">
    <property type="term" value="F:GTP binding"/>
    <property type="evidence" value="ECO:0007669"/>
    <property type="project" value="UniProtKB-UniRule"/>
</dbReference>
<dbReference type="GO" id="GO:0003924">
    <property type="term" value="F:GTPase activity"/>
    <property type="evidence" value="ECO:0007669"/>
    <property type="project" value="UniProtKB-UniRule"/>
</dbReference>
<dbReference type="GO" id="GO:0097216">
    <property type="term" value="F:guanosine tetraphosphate binding"/>
    <property type="evidence" value="ECO:0007669"/>
    <property type="project" value="UniProtKB-ARBA"/>
</dbReference>
<dbReference type="GO" id="GO:0043022">
    <property type="term" value="F:ribosome binding"/>
    <property type="evidence" value="ECO:0007669"/>
    <property type="project" value="UniProtKB-UniRule"/>
</dbReference>
<dbReference type="GO" id="GO:0003746">
    <property type="term" value="F:translation elongation factor activity"/>
    <property type="evidence" value="ECO:0007669"/>
    <property type="project" value="UniProtKB-UniRule"/>
</dbReference>
<dbReference type="GO" id="GO:0045727">
    <property type="term" value="P:positive regulation of translation"/>
    <property type="evidence" value="ECO:0007669"/>
    <property type="project" value="UniProtKB-UniRule"/>
</dbReference>
<dbReference type="CDD" id="cd03699">
    <property type="entry name" value="EF4_II"/>
    <property type="match status" value="1"/>
</dbReference>
<dbReference type="CDD" id="cd16260">
    <property type="entry name" value="EF4_III"/>
    <property type="match status" value="1"/>
</dbReference>
<dbReference type="CDD" id="cd01890">
    <property type="entry name" value="LepA"/>
    <property type="match status" value="1"/>
</dbReference>
<dbReference type="CDD" id="cd03709">
    <property type="entry name" value="lepA_C"/>
    <property type="match status" value="1"/>
</dbReference>
<dbReference type="FunFam" id="3.40.50.300:FF:000078">
    <property type="entry name" value="Elongation factor 4"/>
    <property type="match status" value="1"/>
</dbReference>
<dbReference type="FunFam" id="2.40.30.10:FF:000015">
    <property type="entry name" value="Translation factor GUF1, mitochondrial"/>
    <property type="match status" value="1"/>
</dbReference>
<dbReference type="FunFam" id="3.30.70.240:FF:000007">
    <property type="entry name" value="Translation factor GUF1, mitochondrial"/>
    <property type="match status" value="1"/>
</dbReference>
<dbReference type="FunFam" id="3.30.70.2570:FF:000001">
    <property type="entry name" value="Translation factor GUF1, mitochondrial"/>
    <property type="match status" value="1"/>
</dbReference>
<dbReference type="FunFam" id="3.30.70.870:FF:000004">
    <property type="entry name" value="Translation factor GUF1, mitochondrial"/>
    <property type="match status" value="1"/>
</dbReference>
<dbReference type="Gene3D" id="3.30.70.240">
    <property type="match status" value="1"/>
</dbReference>
<dbReference type="Gene3D" id="3.30.70.2570">
    <property type="entry name" value="Elongation factor 4, C-terminal domain"/>
    <property type="match status" value="1"/>
</dbReference>
<dbReference type="Gene3D" id="3.30.70.870">
    <property type="entry name" value="Elongation Factor G (Translational Gtpase), domain 3"/>
    <property type="match status" value="1"/>
</dbReference>
<dbReference type="Gene3D" id="3.40.50.300">
    <property type="entry name" value="P-loop containing nucleotide triphosphate hydrolases"/>
    <property type="match status" value="1"/>
</dbReference>
<dbReference type="Gene3D" id="2.40.30.10">
    <property type="entry name" value="Translation factors"/>
    <property type="match status" value="1"/>
</dbReference>
<dbReference type="HAMAP" id="MF_00071">
    <property type="entry name" value="LepA"/>
    <property type="match status" value="1"/>
</dbReference>
<dbReference type="InterPro" id="IPR006297">
    <property type="entry name" value="EF-4"/>
</dbReference>
<dbReference type="InterPro" id="IPR035647">
    <property type="entry name" value="EFG_III/V"/>
</dbReference>
<dbReference type="InterPro" id="IPR000640">
    <property type="entry name" value="EFG_V-like"/>
</dbReference>
<dbReference type="InterPro" id="IPR004161">
    <property type="entry name" value="EFTu-like_2"/>
</dbReference>
<dbReference type="InterPro" id="IPR038363">
    <property type="entry name" value="LepA_C_sf"/>
</dbReference>
<dbReference type="InterPro" id="IPR013842">
    <property type="entry name" value="LepA_CTD"/>
</dbReference>
<dbReference type="InterPro" id="IPR035654">
    <property type="entry name" value="LepA_IV"/>
</dbReference>
<dbReference type="InterPro" id="IPR027417">
    <property type="entry name" value="P-loop_NTPase"/>
</dbReference>
<dbReference type="InterPro" id="IPR005225">
    <property type="entry name" value="Small_GTP-bd"/>
</dbReference>
<dbReference type="InterPro" id="IPR000795">
    <property type="entry name" value="T_Tr_GTP-bd_dom"/>
</dbReference>
<dbReference type="InterPro" id="IPR009000">
    <property type="entry name" value="Transl_B-barrel_sf"/>
</dbReference>
<dbReference type="NCBIfam" id="TIGR01393">
    <property type="entry name" value="lepA"/>
    <property type="match status" value="1"/>
</dbReference>
<dbReference type="NCBIfam" id="TIGR00231">
    <property type="entry name" value="small_GTP"/>
    <property type="match status" value="1"/>
</dbReference>
<dbReference type="PANTHER" id="PTHR43512:SF4">
    <property type="entry name" value="TRANSLATION FACTOR GUF1 HOMOLOG, CHLOROPLASTIC"/>
    <property type="match status" value="1"/>
</dbReference>
<dbReference type="PANTHER" id="PTHR43512">
    <property type="entry name" value="TRANSLATION FACTOR GUF1-RELATED"/>
    <property type="match status" value="1"/>
</dbReference>
<dbReference type="Pfam" id="PF00679">
    <property type="entry name" value="EFG_C"/>
    <property type="match status" value="1"/>
</dbReference>
<dbReference type="Pfam" id="PF00009">
    <property type="entry name" value="GTP_EFTU"/>
    <property type="match status" value="1"/>
</dbReference>
<dbReference type="Pfam" id="PF03144">
    <property type="entry name" value="GTP_EFTU_D2"/>
    <property type="match status" value="1"/>
</dbReference>
<dbReference type="Pfam" id="PF06421">
    <property type="entry name" value="LepA_C"/>
    <property type="match status" value="1"/>
</dbReference>
<dbReference type="PRINTS" id="PR00315">
    <property type="entry name" value="ELONGATNFCT"/>
</dbReference>
<dbReference type="SUPFAM" id="SSF54980">
    <property type="entry name" value="EF-G C-terminal domain-like"/>
    <property type="match status" value="2"/>
</dbReference>
<dbReference type="SUPFAM" id="SSF52540">
    <property type="entry name" value="P-loop containing nucleoside triphosphate hydrolases"/>
    <property type="match status" value="1"/>
</dbReference>
<dbReference type="SUPFAM" id="SSF50447">
    <property type="entry name" value="Translation proteins"/>
    <property type="match status" value="1"/>
</dbReference>
<dbReference type="PROSITE" id="PS51722">
    <property type="entry name" value="G_TR_2"/>
    <property type="match status" value="1"/>
</dbReference>
<feature type="chain" id="PRO_0000176326" description="Elongation factor 4">
    <location>
        <begin position="1"/>
        <end position="595"/>
    </location>
</feature>
<feature type="domain" description="tr-type G">
    <location>
        <begin position="2"/>
        <end position="184"/>
    </location>
</feature>
<feature type="binding site" evidence="1">
    <location>
        <begin position="14"/>
        <end position="19"/>
    </location>
    <ligand>
        <name>GTP</name>
        <dbReference type="ChEBI" id="CHEBI:37565"/>
    </ligand>
</feature>
<feature type="binding site" evidence="1">
    <location>
        <begin position="131"/>
        <end position="134"/>
    </location>
    <ligand>
        <name>GTP</name>
        <dbReference type="ChEBI" id="CHEBI:37565"/>
    </ligand>
</feature>
<keyword id="KW-0997">Cell inner membrane</keyword>
<keyword id="KW-1003">Cell membrane</keyword>
<keyword id="KW-0342">GTP-binding</keyword>
<keyword id="KW-0378">Hydrolase</keyword>
<keyword id="KW-0472">Membrane</keyword>
<keyword id="KW-0547">Nucleotide-binding</keyword>
<keyword id="KW-0648">Protein biosynthesis</keyword>
<keyword id="KW-1185">Reference proteome</keyword>
<protein>
    <recommendedName>
        <fullName evidence="1">Elongation factor 4</fullName>
        <shortName evidence="1">EF-4</shortName>
        <ecNumber evidence="1">3.6.5.n1</ecNumber>
    </recommendedName>
    <alternativeName>
        <fullName evidence="1">Ribosomal back-translocase LepA</fullName>
    </alternativeName>
</protein>
<gene>
    <name evidence="1" type="primary">lepA</name>
    <name type="ordered locus">PSPTO_4220</name>
</gene>
<accession>Q87XF8</accession>
<organism>
    <name type="scientific">Pseudomonas syringae pv. tomato (strain ATCC BAA-871 / DC3000)</name>
    <dbReference type="NCBI Taxonomy" id="223283"/>
    <lineage>
        <taxon>Bacteria</taxon>
        <taxon>Pseudomonadati</taxon>
        <taxon>Pseudomonadota</taxon>
        <taxon>Gammaproteobacteria</taxon>
        <taxon>Pseudomonadales</taxon>
        <taxon>Pseudomonadaceae</taxon>
        <taxon>Pseudomonas</taxon>
    </lineage>
</organism>
<sequence>MSHIRNFSIIAHIDHGKSTLADRFIQMCGGLSEREMEAQVLDSMDLERERGITIKAHSVTLYYKAKDGITYQLNFIDTPGHVDFTYEVSRSLAACEGALLVVDAGQGVEAQSVANCYTAIEQGLEVMPVLNKMDLPQADPDRVKEEIEKIIGIDATDAVACSAKSGMGVDEVLERLVATIPPPTGDIEAPLQALIIDSWFDNYLGVVSLVRVRHGRVKKGDKILVKSTGKLHLVDSVGVFNPKHSATVDLKAGEVGFIIAGIKDIHGAPVGDTLTLSTTPDVDVLPGFKRIQPQVYAGLFPVSSDDFEDFREALQKLTLNDSSLQYSPESSDALGFGFRCGFLGMLHMEIIQERLEREYNLDLITTAPTVIFELLLKTGETIYVDNPSKLPDLSAIEDMREPIVRANILVPQEHLGNVITLCIEKRGVQHDMLFLGTQVQVSYDLPMNEVVLDFFDRLKSVSRGYASLDYHFDRYQSANLVKLDVLINGEKVDALALIVHRDNAHYKGRALTEKMKELIPRQMFDVAIQAAIGGQIVARTTVKALRKNVLAKCYGGDVSRKRKLLEKQKAGKKRMKQVGNVEIPQEAFLAVLRLE</sequence>
<proteinExistence type="inferred from homology"/>
<comment type="function">
    <text evidence="1">Required for accurate and efficient protein synthesis under certain stress conditions. May act as a fidelity factor of the translation reaction, by catalyzing a one-codon backward translocation of tRNAs on improperly translocated ribosomes. Back-translocation proceeds from a post-translocation (POST) complex to a pre-translocation (PRE) complex, thus giving elongation factor G a second chance to translocate the tRNAs correctly. Binds to ribosomes in a GTP-dependent manner.</text>
</comment>
<comment type="catalytic activity">
    <reaction evidence="1">
        <text>GTP + H2O = GDP + phosphate + H(+)</text>
        <dbReference type="Rhea" id="RHEA:19669"/>
        <dbReference type="ChEBI" id="CHEBI:15377"/>
        <dbReference type="ChEBI" id="CHEBI:15378"/>
        <dbReference type="ChEBI" id="CHEBI:37565"/>
        <dbReference type="ChEBI" id="CHEBI:43474"/>
        <dbReference type="ChEBI" id="CHEBI:58189"/>
        <dbReference type="EC" id="3.6.5.n1"/>
    </reaction>
</comment>
<comment type="subcellular location">
    <subcellularLocation>
        <location evidence="1">Cell inner membrane</location>
        <topology evidence="1">Peripheral membrane protein</topology>
        <orientation evidence="1">Cytoplasmic side</orientation>
    </subcellularLocation>
</comment>
<comment type="similarity">
    <text evidence="1">Belongs to the TRAFAC class translation factor GTPase superfamily. Classic translation factor GTPase family. LepA subfamily.</text>
</comment>
<reference key="1">
    <citation type="journal article" date="2003" name="Proc. Natl. Acad. Sci. U.S.A.">
        <title>The complete genome sequence of the Arabidopsis and tomato pathogen Pseudomonas syringae pv. tomato DC3000.</title>
        <authorList>
            <person name="Buell C.R."/>
            <person name="Joardar V."/>
            <person name="Lindeberg M."/>
            <person name="Selengut J."/>
            <person name="Paulsen I.T."/>
            <person name="Gwinn M.L."/>
            <person name="Dodson R.J."/>
            <person name="DeBoy R.T."/>
            <person name="Durkin A.S."/>
            <person name="Kolonay J.F."/>
            <person name="Madupu R."/>
            <person name="Daugherty S.C."/>
            <person name="Brinkac L.M."/>
            <person name="Beanan M.J."/>
            <person name="Haft D.H."/>
            <person name="Nelson W.C."/>
            <person name="Davidsen T.M."/>
            <person name="Zafar N."/>
            <person name="Zhou L."/>
            <person name="Liu J."/>
            <person name="Yuan Q."/>
            <person name="Khouri H.M."/>
            <person name="Fedorova N.B."/>
            <person name="Tran B."/>
            <person name="Russell D."/>
            <person name="Berry K.J."/>
            <person name="Utterback T.R."/>
            <person name="Van Aken S.E."/>
            <person name="Feldblyum T.V."/>
            <person name="D'Ascenzo M."/>
            <person name="Deng W.-L."/>
            <person name="Ramos A.R."/>
            <person name="Alfano J.R."/>
            <person name="Cartinhour S."/>
            <person name="Chatterjee A.K."/>
            <person name="Delaney T.P."/>
            <person name="Lazarowitz S.G."/>
            <person name="Martin G.B."/>
            <person name="Schneider D.J."/>
            <person name="Tang X."/>
            <person name="Bender C.L."/>
            <person name="White O."/>
            <person name="Fraser C.M."/>
            <person name="Collmer A."/>
        </authorList>
    </citation>
    <scope>NUCLEOTIDE SEQUENCE [LARGE SCALE GENOMIC DNA]</scope>
    <source>
        <strain>ATCC BAA-871 / DC3000</strain>
    </source>
</reference>